<organism>
    <name type="scientific">Ehrlichia canis (strain Jake)</name>
    <dbReference type="NCBI Taxonomy" id="269484"/>
    <lineage>
        <taxon>Bacteria</taxon>
        <taxon>Pseudomonadati</taxon>
        <taxon>Pseudomonadota</taxon>
        <taxon>Alphaproteobacteria</taxon>
        <taxon>Rickettsiales</taxon>
        <taxon>Anaplasmataceae</taxon>
        <taxon>Ehrlichia</taxon>
    </lineage>
</organism>
<sequence length="303" mass="33730">MKIIFMGSPEFSVSALSYLLENESHEVVAVYTKIPKPAGRRGRILTKTPVHIIAEQNNIEVNTPKSLKHDAEQEKILSLNPDVIVVVAYGLIIPQGVLSIPKYGCINIHPSLLPRWRGAAPIHYAILSGDDKTGVTIIQMNELLDEGDILLQRDIPIDEQDNIDTLSKKLAHLGSSMLIEVLDNIDNLVPIKQNNDDATYAHKIIDFHIDFNEAADVICRKVRALYPRAFLLFNGKRLRILKTSYYSDSSVQDLKPGAVIDSHMNIKCKDGVLVPLVVQMEGKNPCNIDDFILGYNVLNCSIA</sequence>
<proteinExistence type="inferred from homology"/>
<accession>Q3YSQ0</accession>
<reference key="1">
    <citation type="journal article" date="2006" name="J. Bacteriol.">
        <title>The genome of the obligately intracellular bacterium Ehrlichia canis reveals themes of complex membrane structure and immune evasion strategies.</title>
        <authorList>
            <person name="Mavromatis K."/>
            <person name="Doyle C.K."/>
            <person name="Lykidis A."/>
            <person name="Ivanova N."/>
            <person name="Francino M.P."/>
            <person name="Chain P."/>
            <person name="Shin M."/>
            <person name="Malfatti S."/>
            <person name="Larimer F."/>
            <person name="Copeland A."/>
            <person name="Detter J.C."/>
            <person name="Land M."/>
            <person name="Richardson P.M."/>
            <person name="Yu X.J."/>
            <person name="Walker D.H."/>
            <person name="McBride J.W."/>
            <person name="Kyrpides N.C."/>
        </authorList>
    </citation>
    <scope>NUCLEOTIDE SEQUENCE [LARGE SCALE GENOMIC DNA]</scope>
    <source>
        <strain>Jake</strain>
    </source>
</reference>
<name>FMT_EHRCJ</name>
<evidence type="ECO:0000255" key="1">
    <source>
        <dbReference type="HAMAP-Rule" id="MF_00182"/>
    </source>
</evidence>
<keyword id="KW-0648">Protein biosynthesis</keyword>
<keyword id="KW-0808">Transferase</keyword>
<gene>
    <name evidence="1" type="primary">fmt</name>
    <name type="ordered locus">Ecaj_0205</name>
</gene>
<feature type="chain" id="PRO_1000020058" description="Methionyl-tRNA formyltransferase">
    <location>
        <begin position="1"/>
        <end position="303"/>
    </location>
</feature>
<feature type="binding site" evidence="1">
    <location>
        <begin position="111"/>
        <end position="114"/>
    </location>
    <ligand>
        <name>(6S)-5,6,7,8-tetrahydrofolate</name>
        <dbReference type="ChEBI" id="CHEBI:57453"/>
    </ligand>
</feature>
<dbReference type="EC" id="2.1.2.9" evidence="1"/>
<dbReference type="EMBL" id="CP000107">
    <property type="protein sequence ID" value="AAZ68255.1"/>
    <property type="molecule type" value="Genomic_DNA"/>
</dbReference>
<dbReference type="RefSeq" id="WP_011304333.1">
    <property type="nucleotide sequence ID" value="NC_007354.1"/>
</dbReference>
<dbReference type="SMR" id="Q3YSQ0"/>
<dbReference type="FunCoup" id="Q3YSQ0">
    <property type="interactions" value="301"/>
</dbReference>
<dbReference type="STRING" id="269484.Ecaj_0205"/>
<dbReference type="KEGG" id="ecn:Ecaj_0205"/>
<dbReference type="eggNOG" id="COG0223">
    <property type="taxonomic scope" value="Bacteria"/>
</dbReference>
<dbReference type="HOGENOM" id="CLU_033347_1_1_5"/>
<dbReference type="InParanoid" id="Q3YSQ0"/>
<dbReference type="Proteomes" id="UP000000435">
    <property type="component" value="Chromosome"/>
</dbReference>
<dbReference type="GO" id="GO:0005829">
    <property type="term" value="C:cytosol"/>
    <property type="evidence" value="ECO:0007669"/>
    <property type="project" value="TreeGrafter"/>
</dbReference>
<dbReference type="GO" id="GO:0004479">
    <property type="term" value="F:methionyl-tRNA formyltransferase activity"/>
    <property type="evidence" value="ECO:0007669"/>
    <property type="project" value="UniProtKB-UniRule"/>
</dbReference>
<dbReference type="CDD" id="cd08646">
    <property type="entry name" value="FMT_core_Met-tRNA-FMT_N"/>
    <property type="match status" value="1"/>
</dbReference>
<dbReference type="CDD" id="cd08704">
    <property type="entry name" value="Met_tRNA_FMT_C"/>
    <property type="match status" value="1"/>
</dbReference>
<dbReference type="Gene3D" id="3.40.50.12230">
    <property type="match status" value="1"/>
</dbReference>
<dbReference type="HAMAP" id="MF_00182">
    <property type="entry name" value="Formyl_trans"/>
    <property type="match status" value="1"/>
</dbReference>
<dbReference type="InterPro" id="IPR005794">
    <property type="entry name" value="Fmt"/>
</dbReference>
<dbReference type="InterPro" id="IPR005793">
    <property type="entry name" value="Formyl_trans_C"/>
</dbReference>
<dbReference type="InterPro" id="IPR002376">
    <property type="entry name" value="Formyl_transf_N"/>
</dbReference>
<dbReference type="InterPro" id="IPR036477">
    <property type="entry name" value="Formyl_transf_N_sf"/>
</dbReference>
<dbReference type="InterPro" id="IPR011034">
    <property type="entry name" value="Formyl_transferase-like_C_sf"/>
</dbReference>
<dbReference type="InterPro" id="IPR001555">
    <property type="entry name" value="GART_AS"/>
</dbReference>
<dbReference type="InterPro" id="IPR044135">
    <property type="entry name" value="Met-tRNA-FMT_C"/>
</dbReference>
<dbReference type="InterPro" id="IPR041711">
    <property type="entry name" value="Met-tRNA-FMT_N"/>
</dbReference>
<dbReference type="NCBIfam" id="TIGR00460">
    <property type="entry name" value="fmt"/>
    <property type="match status" value="1"/>
</dbReference>
<dbReference type="PANTHER" id="PTHR11138">
    <property type="entry name" value="METHIONYL-TRNA FORMYLTRANSFERASE"/>
    <property type="match status" value="1"/>
</dbReference>
<dbReference type="PANTHER" id="PTHR11138:SF5">
    <property type="entry name" value="METHIONYL-TRNA FORMYLTRANSFERASE, MITOCHONDRIAL"/>
    <property type="match status" value="1"/>
</dbReference>
<dbReference type="Pfam" id="PF02911">
    <property type="entry name" value="Formyl_trans_C"/>
    <property type="match status" value="1"/>
</dbReference>
<dbReference type="Pfam" id="PF00551">
    <property type="entry name" value="Formyl_trans_N"/>
    <property type="match status" value="1"/>
</dbReference>
<dbReference type="SUPFAM" id="SSF50486">
    <property type="entry name" value="FMT C-terminal domain-like"/>
    <property type="match status" value="1"/>
</dbReference>
<dbReference type="SUPFAM" id="SSF53328">
    <property type="entry name" value="Formyltransferase"/>
    <property type="match status" value="1"/>
</dbReference>
<dbReference type="PROSITE" id="PS00373">
    <property type="entry name" value="GART"/>
    <property type="match status" value="1"/>
</dbReference>
<comment type="function">
    <text evidence="1">Attaches a formyl group to the free amino group of methionyl-tRNA(fMet). The formyl group appears to play a dual role in the initiator identity of N-formylmethionyl-tRNA by promoting its recognition by IF2 and preventing the misappropriation of this tRNA by the elongation apparatus.</text>
</comment>
<comment type="catalytic activity">
    <reaction evidence="1">
        <text>L-methionyl-tRNA(fMet) + (6R)-10-formyltetrahydrofolate = N-formyl-L-methionyl-tRNA(fMet) + (6S)-5,6,7,8-tetrahydrofolate + H(+)</text>
        <dbReference type="Rhea" id="RHEA:24380"/>
        <dbReference type="Rhea" id="RHEA-COMP:9952"/>
        <dbReference type="Rhea" id="RHEA-COMP:9953"/>
        <dbReference type="ChEBI" id="CHEBI:15378"/>
        <dbReference type="ChEBI" id="CHEBI:57453"/>
        <dbReference type="ChEBI" id="CHEBI:78530"/>
        <dbReference type="ChEBI" id="CHEBI:78844"/>
        <dbReference type="ChEBI" id="CHEBI:195366"/>
        <dbReference type="EC" id="2.1.2.9"/>
    </reaction>
</comment>
<comment type="similarity">
    <text evidence="1">Belongs to the Fmt family.</text>
</comment>
<protein>
    <recommendedName>
        <fullName evidence="1">Methionyl-tRNA formyltransferase</fullName>
        <ecNumber evidence="1">2.1.2.9</ecNumber>
    </recommendedName>
</protein>